<organism>
    <name type="scientific">Gallus gallus</name>
    <name type="common">Chicken</name>
    <dbReference type="NCBI Taxonomy" id="9031"/>
    <lineage>
        <taxon>Eukaryota</taxon>
        <taxon>Metazoa</taxon>
        <taxon>Chordata</taxon>
        <taxon>Craniata</taxon>
        <taxon>Vertebrata</taxon>
        <taxon>Euteleostomi</taxon>
        <taxon>Archelosauria</taxon>
        <taxon>Archosauria</taxon>
        <taxon>Dinosauria</taxon>
        <taxon>Saurischia</taxon>
        <taxon>Theropoda</taxon>
        <taxon>Coelurosauria</taxon>
        <taxon>Aves</taxon>
        <taxon>Neognathae</taxon>
        <taxon>Galloanserae</taxon>
        <taxon>Galliformes</taxon>
        <taxon>Phasianidae</taxon>
        <taxon>Phasianinae</taxon>
        <taxon>Gallus</taxon>
    </lineage>
</organism>
<protein>
    <recommendedName>
        <fullName>Heparan-sulfate 6-O-sulfotransferase 2</fullName>
        <shortName>HS6ST-2</shortName>
        <shortName>cHS6ST-2</shortName>
        <ecNumber>2.8.2.-</ecNumber>
    </recommendedName>
</protein>
<dbReference type="EC" id="2.8.2.-"/>
<dbReference type="EMBL" id="AB071190">
    <property type="protein sequence ID" value="BAD02830.1"/>
    <property type="molecule type" value="mRNA"/>
</dbReference>
<dbReference type="EMBL" id="AJ720493">
    <property type="protein sequence ID" value="CAG32152.1"/>
    <property type="molecule type" value="mRNA"/>
</dbReference>
<dbReference type="RefSeq" id="NP_989821.1">
    <property type="nucleotide sequence ID" value="NM_204490.2"/>
</dbReference>
<dbReference type="SMR" id="Q76LW2"/>
<dbReference type="FunCoup" id="Q76LW2">
    <property type="interactions" value="181"/>
</dbReference>
<dbReference type="STRING" id="9031.ENSGALP00000048682"/>
<dbReference type="GlyCosmos" id="Q76LW2">
    <property type="glycosylation" value="4 sites, No reported glycans"/>
</dbReference>
<dbReference type="GlyGen" id="Q76LW2">
    <property type="glycosylation" value="4 sites"/>
</dbReference>
<dbReference type="PaxDb" id="9031-ENSGALP00000009781"/>
<dbReference type="Ensembl" id="ENSGALT00010041958.1">
    <property type="protein sequence ID" value="ENSGALP00010024556.1"/>
    <property type="gene ID" value="ENSGALG00010017387.1"/>
</dbReference>
<dbReference type="GeneID" id="395150"/>
<dbReference type="KEGG" id="gga:395150"/>
<dbReference type="CTD" id="90161"/>
<dbReference type="VEuPathDB" id="HostDB:geneid_395150"/>
<dbReference type="eggNOG" id="KOG3955">
    <property type="taxonomic scope" value="Eukaryota"/>
</dbReference>
<dbReference type="GeneTree" id="ENSGT00950000183071"/>
<dbReference type="InParanoid" id="Q76LW2"/>
<dbReference type="OMA" id="WDLDENS"/>
<dbReference type="OrthoDB" id="406981at2759"/>
<dbReference type="PhylomeDB" id="Q76LW2"/>
<dbReference type="Reactome" id="R-GGA-2022928">
    <property type="pathway name" value="HS-GAG biosynthesis"/>
</dbReference>
<dbReference type="PRO" id="PR:Q76LW2"/>
<dbReference type="Proteomes" id="UP000000539">
    <property type="component" value="Chromosome 4"/>
</dbReference>
<dbReference type="Bgee" id="ENSGALG00000034250">
    <property type="expression patterns" value="Expressed in cerebellum and 13 other cell types or tissues"/>
</dbReference>
<dbReference type="GO" id="GO:0016020">
    <property type="term" value="C:membrane"/>
    <property type="evidence" value="ECO:0007669"/>
    <property type="project" value="UniProtKB-SubCell"/>
</dbReference>
<dbReference type="GO" id="GO:0017095">
    <property type="term" value="F:heparan sulfate 6-sulfotransferase activity"/>
    <property type="evidence" value="ECO:0000318"/>
    <property type="project" value="GO_Central"/>
</dbReference>
<dbReference type="GO" id="GO:0060173">
    <property type="term" value="P:limb development"/>
    <property type="evidence" value="ECO:0000314"/>
    <property type="project" value="UniProtKB"/>
</dbReference>
<dbReference type="FunFam" id="3.40.50.300:FF:000852">
    <property type="entry name" value="Heparan-sulfate 6-O-sulfotransferase"/>
    <property type="match status" value="1"/>
</dbReference>
<dbReference type="FunFam" id="3.40.50.300:FF:001933">
    <property type="entry name" value="Heparan-sulfate 6-O-sulfotransferase"/>
    <property type="match status" value="1"/>
</dbReference>
<dbReference type="Gene3D" id="3.40.50.300">
    <property type="entry name" value="P-loop containing nucleotide triphosphate hydrolases"/>
    <property type="match status" value="1"/>
</dbReference>
<dbReference type="InterPro" id="IPR010635">
    <property type="entry name" value="Heparan_SO4-6-sulfoTrfase"/>
</dbReference>
<dbReference type="InterPro" id="IPR027417">
    <property type="entry name" value="P-loop_NTPase"/>
</dbReference>
<dbReference type="InterPro" id="IPR005331">
    <property type="entry name" value="Sulfotransferase"/>
</dbReference>
<dbReference type="PANTHER" id="PTHR12812">
    <property type="entry name" value="HEPARAN SULFATE 6-O-SULFOTRANSFERASE 3"/>
    <property type="match status" value="1"/>
</dbReference>
<dbReference type="PANTHER" id="PTHR12812:SF6">
    <property type="entry name" value="HEPARAN-SULFATE 6-O-SULFOTRANSFERASE 2"/>
    <property type="match status" value="1"/>
</dbReference>
<dbReference type="Pfam" id="PF03567">
    <property type="entry name" value="Sulfotransfer_2"/>
    <property type="match status" value="1"/>
</dbReference>
<dbReference type="SUPFAM" id="SSF52540">
    <property type="entry name" value="P-loop containing nucleoside triphosphate hydrolases"/>
    <property type="match status" value="1"/>
</dbReference>
<feature type="chain" id="PRO_0000190807" description="Heparan-sulfate 6-O-sulfotransferase 2">
    <location>
        <begin position="1"/>
        <end position="403"/>
    </location>
</feature>
<feature type="topological domain" description="Cytoplasmic" evidence="3">
    <location>
        <begin position="1"/>
        <end position="7"/>
    </location>
</feature>
<feature type="transmembrane region" description="Helical; Signal-anchor for type II membrane protein" evidence="3">
    <location>
        <begin position="8"/>
        <end position="28"/>
    </location>
</feature>
<feature type="topological domain" description="Lumenal" evidence="3">
    <location>
        <begin position="29"/>
        <end position="403"/>
    </location>
</feature>
<feature type="region of interest" description="Disordered" evidence="4">
    <location>
        <begin position="381"/>
        <end position="403"/>
    </location>
</feature>
<feature type="active site" description="Proton acceptor" evidence="2">
    <location>
        <position position="145"/>
    </location>
</feature>
<feature type="binding site" evidence="2">
    <location>
        <begin position="88"/>
        <end position="96"/>
    </location>
    <ligand>
        <name>3'-phosphoadenylyl sulfate</name>
        <dbReference type="ChEBI" id="CHEBI:58339"/>
    </ligand>
</feature>
<feature type="binding site" evidence="2">
    <location>
        <begin position="118"/>
        <end position="119"/>
    </location>
    <ligand>
        <name>substrate</name>
    </ligand>
</feature>
<feature type="binding site" evidence="2">
    <location>
        <position position="135"/>
    </location>
    <ligand>
        <name>substrate</name>
    </ligand>
</feature>
<feature type="binding site" evidence="2">
    <location>
        <position position="140"/>
    </location>
    <ligand>
        <name>substrate</name>
    </ligand>
</feature>
<feature type="binding site" evidence="2">
    <location>
        <position position="145"/>
    </location>
    <ligand>
        <name>substrate</name>
    </ligand>
</feature>
<feature type="binding site" evidence="2">
    <location>
        <position position="180"/>
    </location>
    <ligand>
        <name>3'-phosphoadenylyl sulfate</name>
        <dbReference type="ChEBI" id="CHEBI:58339"/>
    </ligand>
</feature>
<feature type="binding site" evidence="2">
    <location>
        <position position="188"/>
    </location>
    <ligand>
        <name>3'-phosphoadenylyl sulfate</name>
        <dbReference type="ChEBI" id="CHEBI:58339"/>
    </ligand>
</feature>
<feature type="binding site" evidence="2">
    <location>
        <position position="192"/>
    </location>
    <ligand>
        <name>substrate</name>
    </ligand>
</feature>
<feature type="binding site" evidence="2">
    <location>
        <position position="199"/>
    </location>
    <ligand>
        <name>substrate</name>
    </ligand>
</feature>
<feature type="binding site" evidence="2">
    <location>
        <begin position="312"/>
        <end position="314"/>
    </location>
    <ligand>
        <name>3'-phosphoadenylyl sulfate</name>
        <dbReference type="ChEBI" id="CHEBI:58339"/>
    </ligand>
</feature>
<feature type="binding site" evidence="2">
    <location>
        <begin position="318"/>
        <end position="319"/>
    </location>
    <ligand>
        <name>3'-phosphoadenylyl sulfate</name>
        <dbReference type="ChEBI" id="CHEBI:58339"/>
    </ligand>
</feature>
<feature type="glycosylation site" description="N-linked (GlcNAc...) asparagine" evidence="3">
    <location>
        <position position="64"/>
    </location>
</feature>
<feature type="glycosylation site" description="N-linked (GlcNAc...) asparagine" evidence="3">
    <location>
        <position position="259"/>
    </location>
</feature>
<feature type="glycosylation site" description="N-linked (GlcNAc...) asparagine" evidence="3">
    <location>
        <position position="315"/>
    </location>
</feature>
<feature type="glycosylation site" description="N-linked (GlcNAc...) asparagine" evidence="3">
    <location>
        <position position="389"/>
    </location>
</feature>
<feature type="sequence conflict" description="In Ref. 2; CAG32152." evidence="7" ref="2">
    <original>R</original>
    <variation>H</variation>
    <location>
        <position position="38"/>
    </location>
</feature>
<feature type="sequence conflict" description="In Ref. 2; CAG32152." evidence="7" ref="2">
    <location>
        <begin position="215"/>
        <end position="223"/>
    </location>
</feature>
<comment type="function">
    <text evidence="1 6">6-O-sulfation enzyme which catalyzes the transfer of sulfate from 3'-phosphoadenosine 5'-phosphosulfate (PAPS) to position 6 of the N-sulfoglucosamine residue (GlcNS) of heparan sulfate (By similarity). May also play a role in limb development.</text>
</comment>
<comment type="catalytic activity">
    <reaction>
        <text>alpha-D-glucosaminyl-[heparan sulfate](n) + 3'-phosphoadenylyl sulfate = 6-sulfo-alpha-D-glucosaminyl-[heparan sulfate](n) + adenosine 3',5'-bisphosphate + H(+)</text>
        <dbReference type="Rhea" id="RHEA:56604"/>
        <dbReference type="Rhea" id="RHEA-COMP:9830"/>
        <dbReference type="Rhea" id="RHEA-COMP:14621"/>
        <dbReference type="ChEBI" id="CHEBI:15378"/>
        <dbReference type="ChEBI" id="CHEBI:58339"/>
        <dbReference type="ChEBI" id="CHEBI:58343"/>
        <dbReference type="ChEBI" id="CHEBI:58388"/>
        <dbReference type="ChEBI" id="CHEBI:140604"/>
    </reaction>
</comment>
<comment type="subcellular location">
    <subcellularLocation>
        <location evidence="7">Membrane</location>
        <topology evidence="7">Single-pass type II membrane protein</topology>
    </subcellularLocation>
</comment>
<comment type="developmental stage">
    <text evidence="5">Expressed in the developing wing bud. At stage 31, widely expressed with a higher level in limb and head.</text>
</comment>
<comment type="similarity">
    <text evidence="7">Belongs to the sulfotransferase 6 family.</text>
</comment>
<gene>
    <name type="primary">HS6ST2</name>
    <name type="ORF">RCJMB04_19a20</name>
</gene>
<proteinExistence type="evidence at protein level"/>
<keyword id="KW-0325">Glycoprotein</keyword>
<keyword id="KW-0472">Membrane</keyword>
<keyword id="KW-1185">Reference proteome</keyword>
<keyword id="KW-0735">Signal-anchor</keyword>
<keyword id="KW-0808">Transferase</keyword>
<keyword id="KW-0812">Transmembrane</keyword>
<keyword id="KW-1133">Transmembrane helix</keyword>
<reference key="1">
    <citation type="journal article" date="2004" name="J. Biol. Chem.">
        <title>Distinctive expression patterns of heparan sulfate O-sulfotransferases and regional differences in heparan sulfate structure in chick limb buds.</title>
        <authorList>
            <person name="Nogami K."/>
            <person name="Suzuki H."/>
            <person name="Habuchi H."/>
            <person name="Ishiguro N."/>
            <person name="Iwata H."/>
            <person name="Kimata K."/>
        </authorList>
    </citation>
    <scope>NUCLEOTIDE SEQUENCE [MRNA]</scope>
    <scope>DEVELOPMENTAL STAGE</scope>
</reference>
<reference key="2">
    <citation type="journal article" date="2005" name="Genome Biol.">
        <title>Full-length cDNAs from chicken bursal lymphocytes to facilitate gene function analysis.</title>
        <authorList>
            <person name="Caldwell R.B."/>
            <person name="Kierzek A.M."/>
            <person name="Arakawa H."/>
            <person name="Bezzubov Y."/>
            <person name="Zaim J."/>
            <person name="Fiedler P."/>
            <person name="Kutter S."/>
            <person name="Blagodatski A."/>
            <person name="Kostovska D."/>
            <person name="Koter M."/>
            <person name="Plachy J."/>
            <person name="Carninci P."/>
            <person name="Hayashizaki Y."/>
            <person name="Buerstedde J.-M."/>
        </authorList>
    </citation>
    <scope>NUCLEOTIDE SEQUENCE [LARGE SCALE MRNA]</scope>
    <source>
        <strain>CB</strain>
        <tissue>Bursa of Fabricius</tissue>
    </source>
</reference>
<reference key="3">
    <citation type="journal article" date="2010" name="Dev. Growth Differ.">
        <title>Functional analysis of chick heparan sulfate 6-O-sulfotransferases in limb bud development.</title>
        <authorList>
            <person name="Kobayashi T."/>
            <person name="Habuchi H."/>
            <person name="Nogami K."/>
            <person name="Ashikari-Hada S."/>
            <person name="Tamura K."/>
            <person name="Ide H."/>
            <person name="Kimata K."/>
        </authorList>
    </citation>
    <scope>FUNCTION IN LIMB BUD DEVELOPMENT</scope>
</reference>
<accession>Q76LW2</accession>
<accession>Q5ZJE1</accession>
<name>H6ST2_CHICK</name>
<evidence type="ECO:0000250" key="1"/>
<evidence type="ECO:0000250" key="2">
    <source>
        <dbReference type="UniProtKB" id="A0MGZ7"/>
    </source>
</evidence>
<evidence type="ECO:0000255" key="3"/>
<evidence type="ECO:0000256" key="4">
    <source>
        <dbReference type="SAM" id="MobiDB-lite"/>
    </source>
</evidence>
<evidence type="ECO:0000269" key="5">
    <source>
    </source>
</evidence>
<evidence type="ECO:0000269" key="6">
    <source>
    </source>
</evidence>
<evidence type="ECO:0000305" key="7"/>
<sequence length="403" mass="47175">MEDRSHKVLLALVMLFLFAVIVLQYVCPGTECQLLRLRALSPAAAADPYRAEDETPARFVPRFNFSAGDLLRRVDFNIKGDDLIVFLHIQKTGGTTFGRHLVRNIQLEQPCECRAGQKKCTCHRPGKRETWLFSRFSTGWSCGLHADWTELTNCVPSVVDSKKEVRLRPSRNFYYITILRDPVSRYLSEWRHVQRGATWKASLHVCDGRSPTTEELPSCYTGDDWSGCSLQEFMDCPYNLANNRQVRMLSDLSLVGCYNLSVMPEEQRNKVLLDSAKENLKRMAFFGLTEFQRKTQYLFEKTFNMNFISPFTQYNSTRASSVEIDEQTQQRIEALNFLDMELYDYAKDLFLQRYQYMRQKEHQEARRKRQEQRKILRAKQAHLREQGENSSSTDYLGNVERWR</sequence>